<protein>
    <recommendedName>
        <fullName>Pheromone-regulated membrane protein 8</fullName>
    </recommendedName>
    <alternativeName>
        <fullName>DUP240 protein PRM8</fullName>
    </alternativeName>
    <alternativeName>
        <fullName>Protein DUP1</fullName>
    </alternativeName>
</protein>
<name>PRM8_YEAST</name>
<comment type="function">
    <text>May be involved in endoplasmic reticulum exit trafficking of proteins.</text>
</comment>
<comment type="subunit">
    <text evidence="4">Interacts with PRM9. Binds to SEC23/24 of COPII coated vesicles.</text>
</comment>
<comment type="subcellular location">
    <subcellularLocation>
        <location evidence="6">Membrane</location>
        <topology evidence="6">Multi-pass membrane protein</topology>
    </subcellularLocation>
    <subcellularLocation>
        <location evidence="3 4">Endoplasmic reticulum</location>
    </subcellularLocation>
</comment>
<comment type="miscellaneous">
    <text evidence="5">Present with 1254 molecules/cell in log phase SD medium.</text>
</comment>
<comment type="miscellaneous">
    <text>Members of the DUP240 multigene family are specific to S.cerevisiae sensu strictu. Cells lacking all 10 DUP240 proteins show no obvious alterations in mating, sporulation and cell growth.</text>
</comment>
<comment type="similarity">
    <text evidence="6">Belongs to the DUP/COS family.</text>
</comment>
<sequence>MQTPSENTNAKSDSLDEPGAYLIEENVALPKDIFHSYLSYWIYEAAHCTPVMLLSLVIGVLISIIILFHDNENCVGVSVGFLLIFSGILVIVLILRFGPQISDEDFKCKLLMEIITRKPTVKGKEWRTITYKMNQYLFDNDLWNTPYYFYRDEDCHRYFLSLIKGRTFKKQKESSASNVKDAQSNDETAGTPNEAAESSSFSAGPNFIKLLTKAAEIEQQFQKEYWRQEYPGVDEFF</sequence>
<feature type="chain" id="PRO_0000207523" description="Pheromone-regulated membrane protein 8">
    <location>
        <begin position="1"/>
        <end position="237"/>
    </location>
</feature>
<feature type="topological domain" description="Cytoplasmic" evidence="1">
    <location>
        <begin position="1"/>
        <end position="47"/>
    </location>
</feature>
<feature type="transmembrane region" description="Helical" evidence="1">
    <location>
        <begin position="48"/>
        <end position="68"/>
    </location>
</feature>
<feature type="topological domain" description="Extracellular" evidence="1">
    <location>
        <begin position="69"/>
        <end position="74"/>
    </location>
</feature>
<feature type="transmembrane region" description="Helical" evidence="1">
    <location>
        <begin position="75"/>
        <end position="95"/>
    </location>
</feature>
<feature type="topological domain" description="Cytoplasmic" evidence="1">
    <location>
        <begin position="96"/>
        <end position="237"/>
    </location>
</feature>
<feature type="region of interest" description="Disordered" evidence="2">
    <location>
        <begin position="174"/>
        <end position="201"/>
    </location>
</feature>
<feature type="region of interest" description="COPII binding">
    <location>
        <begin position="236"/>
        <end position="237"/>
    </location>
</feature>
<accession>P53174</accession>
<accession>D6VU88</accession>
<keyword id="KW-0256">Endoplasmic reticulum</keyword>
<keyword id="KW-0931">ER-Golgi transport</keyword>
<keyword id="KW-0472">Membrane</keyword>
<keyword id="KW-1185">Reference proteome</keyword>
<keyword id="KW-0812">Transmembrane</keyword>
<keyword id="KW-1133">Transmembrane helix</keyword>
<keyword id="KW-0813">Transport</keyword>
<proteinExistence type="evidence at protein level"/>
<evidence type="ECO:0000255" key="1"/>
<evidence type="ECO:0000256" key="2">
    <source>
        <dbReference type="SAM" id="MobiDB-lite"/>
    </source>
</evidence>
<evidence type="ECO:0000269" key="3">
    <source>
    </source>
</evidence>
<evidence type="ECO:0000269" key="4">
    <source>
    </source>
</evidence>
<evidence type="ECO:0000269" key="5">
    <source>
    </source>
</evidence>
<evidence type="ECO:0000305" key="6"/>
<gene>
    <name type="primary">PRM8</name>
    <name type="synonym">DUP1</name>
    <name type="ordered locus">YGL053W</name>
</gene>
<organism>
    <name type="scientific">Saccharomyces cerevisiae (strain ATCC 204508 / S288c)</name>
    <name type="common">Baker's yeast</name>
    <dbReference type="NCBI Taxonomy" id="559292"/>
    <lineage>
        <taxon>Eukaryota</taxon>
        <taxon>Fungi</taxon>
        <taxon>Dikarya</taxon>
        <taxon>Ascomycota</taxon>
        <taxon>Saccharomycotina</taxon>
        <taxon>Saccharomycetes</taxon>
        <taxon>Saccharomycetales</taxon>
        <taxon>Saccharomycetaceae</taxon>
        <taxon>Saccharomyces</taxon>
    </lineage>
</organism>
<reference key="1">
    <citation type="journal article" date="1997" name="Yeast">
        <title>The characterization of two new clusters of duplicated genes suggests a 'Lego' organization of the yeast Saccharomyces cerevisiae chromosomes.</title>
        <authorList>
            <person name="Feuermann M."/>
            <person name="de Montigny J."/>
            <person name="Potier S."/>
            <person name="Souciet J.-L."/>
        </authorList>
    </citation>
    <scope>NUCLEOTIDE SEQUENCE [GENOMIC DNA]</scope>
    <source>
        <strain>ATCC 204508 / S288c</strain>
    </source>
</reference>
<reference key="2">
    <citation type="journal article" date="1997" name="Nature">
        <title>The nucleotide sequence of Saccharomyces cerevisiae chromosome VII.</title>
        <authorList>
            <person name="Tettelin H."/>
            <person name="Agostoni-Carbone M.L."/>
            <person name="Albermann K."/>
            <person name="Albers M."/>
            <person name="Arroyo J."/>
            <person name="Backes U."/>
            <person name="Barreiros T."/>
            <person name="Bertani I."/>
            <person name="Bjourson A.J."/>
            <person name="Brueckner M."/>
            <person name="Bruschi C.V."/>
            <person name="Carignani G."/>
            <person name="Castagnoli L."/>
            <person name="Cerdan E."/>
            <person name="Clemente M.L."/>
            <person name="Coblenz A."/>
            <person name="Coglievina M."/>
            <person name="Coissac E."/>
            <person name="Defoor E."/>
            <person name="Del Bino S."/>
            <person name="Delius H."/>
            <person name="Delneri D."/>
            <person name="de Wergifosse P."/>
            <person name="Dujon B."/>
            <person name="Durand P."/>
            <person name="Entian K.-D."/>
            <person name="Eraso P."/>
            <person name="Escribano V."/>
            <person name="Fabiani L."/>
            <person name="Fartmann B."/>
            <person name="Feroli F."/>
            <person name="Feuermann M."/>
            <person name="Frontali L."/>
            <person name="Garcia-Gonzalez M."/>
            <person name="Garcia-Saez M.I."/>
            <person name="Goffeau A."/>
            <person name="Guerreiro P."/>
            <person name="Hani J."/>
            <person name="Hansen M."/>
            <person name="Hebling U."/>
            <person name="Hernandez K."/>
            <person name="Heumann K."/>
            <person name="Hilger F."/>
            <person name="Hofmann B."/>
            <person name="Indge K.J."/>
            <person name="James C.M."/>
            <person name="Klima R."/>
            <person name="Koetter P."/>
            <person name="Kramer B."/>
            <person name="Kramer W."/>
            <person name="Lauquin G."/>
            <person name="Leuther H."/>
            <person name="Louis E.J."/>
            <person name="Maillier E."/>
            <person name="Marconi A."/>
            <person name="Martegani E."/>
            <person name="Mazon M.J."/>
            <person name="Mazzoni C."/>
            <person name="McReynolds A.D.K."/>
            <person name="Melchioretto P."/>
            <person name="Mewes H.-W."/>
            <person name="Minenkova O."/>
            <person name="Mueller-Auer S."/>
            <person name="Nawrocki A."/>
            <person name="Netter P."/>
            <person name="Neu R."/>
            <person name="Nombela C."/>
            <person name="Oliver S.G."/>
            <person name="Panzeri L."/>
            <person name="Paoluzi S."/>
            <person name="Plevani P."/>
            <person name="Portetelle D."/>
            <person name="Portillo F."/>
            <person name="Potier S."/>
            <person name="Purnelle B."/>
            <person name="Rieger M."/>
            <person name="Riles L."/>
            <person name="Rinaldi T."/>
            <person name="Robben J."/>
            <person name="Rodrigues-Pousada C."/>
            <person name="Rodriguez-Belmonte E."/>
            <person name="Rodriguez-Torres A.M."/>
            <person name="Rose M."/>
            <person name="Ruzzi M."/>
            <person name="Saliola M."/>
            <person name="Sanchez-Perez M."/>
            <person name="Schaefer B."/>
            <person name="Schaefer M."/>
            <person name="Scharfe M."/>
            <person name="Schmidheini T."/>
            <person name="Schreer A."/>
            <person name="Skala J."/>
            <person name="Souciet J.-L."/>
            <person name="Steensma H.Y."/>
            <person name="Talla E."/>
            <person name="Thierry A."/>
            <person name="Vandenbol M."/>
            <person name="van der Aart Q.J.M."/>
            <person name="Van Dyck L."/>
            <person name="Vanoni M."/>
            <person name="Verhasselt P."/>
            <person name="Voet M."/>
            <person name="Volckaert G."/>
            <person name="Wambutt R."/>
            <person name="Watson M.D."/>
            <person name="Weber N."/>
            <person name="Wedler E."/>
            <person name="Wedler H."/>
            <person name="Wipfli P."/>
            <person name="Wolf K."/>
            <person name="Wright L.F."/>
            <person name="Zaccaria P."/>
            <person name="Zimmermann M."/>
            <person name="Zollner A."/>
            <person name="Kleine K."/>
        </authorList>
    </citation>
    <scope>NUCLEOTIDE SEQUENCE [LARGE SCALE GENOMIC DNA]</scope>
    <source>
        <strain>ATCC 204508 / S288c</strain>
    </source>
</reference>
<reference key="3">
    <citation type="journal article" date="2014" name="G3 (Bethesda)">
        <title>The reference genome sequence of Saccharomyces cerevisiae: Then and now.</title>
        <authorList>
            <person name="Engel S.R."/>
            <person name="Dietrich F.S."/>
            <person name="Fisk D.G."/>
            <person name="Binkley G."/>
            <person name="Balakrishnan R."/>
            <person name="Costanzo M.C."/>
            <person name="Dwight S.S."/>
            <person name="Hitz B.C."/>
            <person name="Karra K."/>
            <person name="Nash R.S."/>
            <person name="Weng S."/>
            <person name="Wong E.D."/>
            <person name="Lloyd P."/>
            <person name="Skrzypek M.S."/>
            <person name="Miyasato S.R."/>
            <person name="Simison M."/>
            <person name="Cherry J.M."/>
        </authorList>
    </citation>
    <scope>GENOME REANNOTATION</scope>
    <source>
        <strain>ATCC 204508 / S288c</strain>
    </source>
</reference>
<reference key="4">
    <citation type="journal article" date="2007" name="Genome Res.">
        <title>Approaching a complete repository of sequence-verified protein-encoding clones for Saccharomyces cerevisiae.</title>
        <authorList>
            <person name="Hu Y."/>
            <person name="Rolfs A."/>
            <person name="Bhullar B."/>
            <person name="Murthy T.V.S."/>
            <person name="Zhu C."/>
            <person name="Berger M.F."/>
            <person name="Camargo A.A."/>
            <person name="Kelley F."/>
            <person name="McCarron S."/>
            <person name="Jepson D."/>
            <person name="Richardson A."/>
            <person name="Raphael J."/>
            <person name="Moreira D."/>
            <person name="Taycher E."/>
            <person name="Zuo D."/>
            <person name="Mohr S."/>
            <person name="Kane M.F."/>
            <person name="Williamson J."/>
            <person name="Simpson A.J.G."/>
            <person name="Bulyk M.L."/>
            <person name="Harlow E."/>
            <person name="Marsischky G."/>
            <person name="Kolodner R.D."/>
            <person name="LaBaer J."/>
        </authorList>
    </citation>
    <scope>NUCLEOTIDE SEQUENCE [GENOMIC DNA]</scope>
    <source>
        <strain>ATCC 204508 / S288c</strain>
    </source>
</reference>
<reference key="5">
    <citation type="journal article" date="2000" name="J. Cell Biol.">
        <title>Prm1p, a pheromone-regulated multispanning membrane protein, facilitates plasma membrane fusion during yeast mating.</title>
        <authorList>
            <person name="Heiman M.G."/>
            <person name="Walter P."/>
        </authorList>
    </citation>
    <scope>NOMENCLATURE</scope>
</reference>
<reference key="6">
    <citation type="journal article" date="2002" name="Microbiology">
        <title>Functional analysis of the Saccharomyces cerevisiae DUP240 multigene family reveals membrane-associated proteins that are not essential for cell viability.</title>
        <authorList>
            <person name="Poirey R."/>
            <person name="Despons L."/>
            <person name="Leh V."/>
            <person name="Lafuente M.-J."/>
            <person name="Potier S."/>
            <person name="Souciet J.-L."/>
            <person name="Jauniaux J.-C."/>
        </authorList>
    </citation>
    <scope>SUBCELLULAR LOCATION</scope>
</reference>
<reference key="7">
    <citation type="journal article" date="2003" name="Mol. Biol. Cell">
        <title>Suppression of coatomer mutants by a new protein family with COPI and COPII binding motifs in Saccharomyces cerevisiae.</title>
        <authorList>
            <person name="Sandmann T."/>
            <person name="Herrmann J.M."/>
            <person name="Dengjel J."/>
            <person name="Schwarz H."/>
            <person name="Spang A."/>
        </authorList>
    </citation>
    <scope>SUBCELLULAR LOCATION</scope>
    <scope>INTERACTION WITH PRM9</scope>
</reference>
<reference key="8">
    <citation type="journal article" date="2003" name="Nature">
        <title>Global analysis of protein expression in yeast.</title>
        <authorList>
            <person name="Ghaemmaghami S."/>
            <person name="Huh W.-K."/>
            <person name="Bower K."/>
            <person name="Howson R.W."/>
            <person name="Belle A."/>
            <person name="Dephoure N."/>
            <person name="O'Shea E.K."/>
            <person name="Weissman J.S."/>
        </authorList>
    </citation>
    <scope>LEVEL OF PROTEIN EXPRESSION [LARGE SCALE ANALYSIS]</scope>
</reference>
<reference key="9">
    <citation type="journal article" date="2006" name="Proc. Natl. Acad. Sci. U.S.A.">
        <title>A global topology map of the Saccharomyces cerevisiae membrane proteome.</title>
        <authorList>
            <person name="Kim H."/>
            <person name="Melen K."/>
            <person name="Oesterberg M."/>
            <person name="von Heijne G."/>
        </authorList>
    </citation>
    <scope>TOPOLOGY [LARGE SCALE ANALYSIS]</scope>
    <source>
        <strain>ATCC 208353 / W303-1A</strain>
    </source>
</reference>
<dbReference type="EMBL" id="Z72575">
    <property type="protein sequence ID" value="CAA96755.1"/>
    <property type="molecule type" value="Genomic_DNA"/>
</dbReference>
<dbReference type="EMBL" id="AY693004">
    <property type="protein sequence ID" value="AAT93023.1"/>
    <property type="molecule type" value="Genomic_DNA"/>
</dbReference>
<dbReference type="EMBL" id="BK006941">
    <property type="protein sequence ID" value="DAA08049.1"/>
    <property type="molecule type" value="Genomic_DNA"/>
</dbReference>
<dbReference type="PIR" id="S64057">
    <property type="entry name" value="S64057"/>
</dbReference>
<dbReference type="RefSeq" id="NP_011462.1">
    <property type="nucleotide sequence ID" value="NM_001180918.1"/>
</dbReference>
<dbReference type="BioGRID" id="33195">
    <property type="interactions" value="76"/>
</dbReference>
<dbReference type="DIP" id="DIP-4067N"/>
<dbReference type="FunCoup" id="P53174">
    <property type="interactions" value="77"/>
</dbReference>
<dbReference type="IntAct" id="P53174">
    <property type="interactions" value="18"/>
</dbReference>
<dbReference type="MINT" id="P53174"/>
<dbReference type="STRING" id="4932.YGL053W"/>
<dbReference type="iPTMnet" id="P53174"/>
<dbReference type="PaxDb" id="4932-YGL053W"/>
<dbReference type="PeptideAtlas" id="P53174"/>
<dbReference type="EnsemblFungi" id="YGL053W_mRNA">
    <property type="protein sequence ID" value="YGL053W"/>
    <property type="gene ID" value="YGL053W"/>
</dbReference>
<dbReference type="GeneID" id="852828"/>
<dbReference type="KEGG" id="sce:YGL053W"/>
<dbReference type="AGR" id="SGD:S000003021"/>
<dbReference type="SGD" id="S000003021">
    <property type="gene designation" value="PRM8"/>
</dbReference>
<dbReference type="VEuPathDB" id="FungiDB:YGL053W"/>
<dbReference type="eggNOG" id="ENOG502SSNW">
    <property type="taxonomic scope" value="Eukaryota"/>
</dbReference>
<dbReference type="GeneTree" id="ENSGT00940000176285"/>
<dbReference type="HOGENOM" id="CLU_081384_0_1_1"/>
<dbReference type="InParanoid" id="P53174"/>
<dbReference type="OMA" id="HDNENCV"/>
<dbReference type="OrthoDB" id="4054881at2759"/>
<dbReference type="BioCyc" id="YEAST:G3O-30562-MONOMER"/>
<dbReference type="BioGRID-ORCS" id="852828">
    <property type="hits" value="0 hits in 10 CRISPR screens"/>
</dbReference>
<dbReference type="ChiTaRS" id="PRM8">
    <property type="organism name" value="yeast"/>
</dbReference>
<dbReference type="PRO" id="PR:P53174"/>
<dbReference type="Proteomes" id="UP000002311">
    <property type="component" value="Chromosome VII"/>
</dbReference>
<dbReference type="RNAct" id="P53174">
    <property type="molecule type" value="protein"/>
</dbReference>
<dbReference type="GO" id="GO:0005783">
    <property type="term" value="C:endoplasmic reticulum"/>
    <property type="evidence" value="ECO:0000314"/>
    <property type="project" value="SGD"/>
</dbReference>
<dbReference type="GO" id="GO:0005886">
    <property type="term" value="C:plasma membrane"/>
    <property type="evidence" value="ECO:0000315"/>
    <property type="project" value="SGD"/>
</dbReference>
<dbReference type="GO" id="GO:0016192">
    <property type="term" value="P:vesicle-mediated transport"/>
    <property type="evidence" value="ECO:0007669"/>
    <property type="project" value="UniProtKB-KW"/>
</dbReference>
<dbReference type="InterPro" id="IPR001142">
    <property type="entry name" value="DUP/COS"/>
</dbReference>
<dbReference type="Pfam" id="PF00674">
    <property type="entry name" value="DUP"/>
    <property type="match status" value="1"/>
</dbReference>